<sequence>MTDLTTHDLAQPGWQTRDHLNDPVVGELCNRFGPDAFTVQATRTGIPVVWVKREQLLDVVTFLKKQPKPYVMLFDLHGMDERLRTHREGLPAADYSVFYHLISIERNRDIMLKVALAENDMHLPTVTKLFPNANWYERETWEMFGMAFDGHPNLTRIMMPKTWEGHPLRKDYPARATEFDPFELTKQKEDLEMESLTFKPEEWGMKRGTENEDFMFLNLGPNHPSSHGAFRIILQLDGEEIVDCVPDVGYHHRGAEKMGERQSWHSYIPYTDRIEYLGGCVNEMPYVLAVEKLAGIEVPDRVKTIRVMLSELFRINSHLLYISTYIQDVGAMTPVFFAFTDRQKIYDLVEAITGFRMHPAWFRIGGVAHDLPRGWERLLREFLDWMPARLDTYVKSALQNTILKGRTQGVAAYNAKEALEWGVTGAGLRATGIGFDVRKWRPYSGYENFDFEVPVGDGISDCYSRVMLKVEELRQSLRILDQCLKNMPEGPFKADHPLTTPPPKERTLQHIDTLINHFLQVSWGPVMPANESFQMVEATKGINSYYLTSDGGTMSYRTRIRTPSYAHLQQIPSVIRGCLVSDLIVYLGSIDFVMSDVDR</sequence>
<proteinExistence type="inferred from homology"/>
<evidence type="ECO:0000255" key="1">
    <source>
        <dbReference type="HAMAP-Rule" id="MF_01359"/>
    </source>
</evidence>
<name>NUOCD_PECAS</name>
<keyword id="KW-0997">Cell inner membrane</keyword>
<keyword id="KW-1003">Cell membrane</keyword>
<keyword id="KW-0472">Membrane</keyword>
<keyword id="KW-0511">Multifunctional enzyme</keyword>
<keyword id="KW-0520">NAD</keyword>
<keyword id="KW-0874">Quinone</keyword>
<keyword id="KW-1185">Reference proteome</keyword>
<keyword id="KW-1278">Translocase</keyword>
<keyword id="KW-0813">Transport</keyword>
<keyword id="KW-0830">Ubiquinone</keyword>
<protein>
    <recommendedName>
        <fullName evidence="1">NADH-quinone oxidoreductase subunit C/D</fullName>
        <ecNumber evidence="1">7.1.1.-</ecNumber>
    </recommendedName>
    <alternativeName>
        <fullName evidence="1">NADH dehydrogenase I subunit C/D</fullName>
    </alternativeName>
    <alternativeName>
        <fullName evidence="1">NDH-1 subunit C/D</fullName>
    </alternativeName>
</protein>
<dbReference type="EC" id="7.1.1.-" evidence="1"/>
<dbReference type="EMBL" id="BX950851">
    <property type="protein sequence ID" value="CAG75925.1"/>
    <property type="molecule type" value="Genomic_DNA"/>
</dbReference>
<dbReference type="RefSeq" id="WP_011094554.1">
    <property type="nucleotide sequence ID" value="NC_004547.2"/>
</dbReference>
<dbReference type="SMR" id="Q6D2R9"/>
<dbReference type="STRING" id="218491.ECA3026"/>
<dbReference type="GeneID" id="57209713"/>
<dbReference type="KEGG" id="eca:ECA3026"/>
<dbReference type="PATRIC" id="fig|218491.5.peg.3059"/>
<dbReference type="eggNOG" id="COG0649">
    <property type="taxonomic scope" value="Bacteria"/>
</dbReference>
<dbReference type="eggNOG" id="COG0852">
    <property type="taxonomic scope" value="Bacteria"/>
</dbReference>
<dbReference type="HOGENOM" id="CLU_015134_3_2_6"/>
<dbReference type="OrthoDB" id="9801496at2"/>
<dbReference type="Proteomes" id="UP000007966">
    <property type="component" value="Chromosome"/>
</dbReference>
<dbReference type="GO" id="GO:0030964">
    <property type="term" value="C:NADH dehydrogenase complex"/>
    <property type="evidence" value="ECO:0007669"/>
    <property type="project" value="InterPro"/>
</dbReference>
<dbReference type="GO" id="GO:0005886">
    <property type="term" value="C:plasma membrane"/>
    <property type="evidence" value="ECO:0007669"/>
    <property type="project" value="UniProtKB-SubCell"/>
</dbReference>
<dbReference type="GO" id="GO:0051287">
    <property type="term" value="F:NAD binding"/>
    <property type="evidence" value="ECO:0007669"/>
    <property type="project" value="InterPro"/>
</dbReference>
<dbReference type="GO" id="GO:0008137">
    <property type="term" value="F:NADH dehydrogenase (ubiquinone) activity"/>
    <property type="evidence" value="ECO:0007669"/>
    <property type="project" value="InterPro"/>
</dbReference>
<dbReference type="GO" id="GO:0050136">
    <property type="term" value="F:NADH:ubiquinone reductase (non-electrogenic) activity"/>
    <property type="evidence" value="ECO:0007669"/>
    <property type="project" value="UniProtKB-UniRule"/>
</dbReference>
<dbReference type="GO" id="GO:0048038">
    <property type="term" value="F:quinone binding"/>
    <property type="evidence" value="ECO:0007669"/>
    <property type="project" value="UniProtKB-KW"/>
</dbReference>
<dbReference type="FunFam" id="1.10.645.10:FF:000001">
    <property type="entry name" value="NADH-quinone oxidoreductase subunit C/D"/>
    <property type="match status" value="1"/>
</dbReference>
<dbReference type="FunFam" id="3.30.460.80:FF:000001">
    <property type="entry name" value="NADH-quinone oxidoreductase subunit C/D"/>
    <property type="match status" value="1"/>
</dbReference>
<dbReference type="Gene3D" id="1.10.645.10">
    <property type="entry name" value="Cytochrome-c3 Hydrogenase, chain B"/>
    <property type="match status" value="1"/>
</dbReference>
<dbReference type="Gene3D" id="3.30.460.80">
    <property type="entry name" value="NADH:ubiquinone oxidoreductase, 30kDa subunit"/>
    <property type="match status" value="1"/>
</dbReference>
<dbReference type="HAMAP" id="MF_01357">
    <property type="entry name" value="NDH1_NuoC"/>
    <property type="match status" value="1"/>
</dbReference>
<dbReference type="HAMAP" id="MF_01359">
    <property type="entry name" value="NDH1_NuoCD_1"/>
    <property type="match status" value="1"/>
</dbReference>
<dbReference type="HAMAP" id="MF_01358">
    <property type="entry name" value="NDH1_NuoD"/>
    <property type="match status" value="1"/>
</dbReference>
<dbReference type="InterPro" id="IPR010218">
    <property type="entry name" value="NADH_DH_suC"/>
</dbReference>
<dbReference type="InterPro" id="IPR023062">
    <property type="entry name" value="NADH_DH_suCD"/>
</dbReference>
<dbReference type="InterPro" id="IPR001135">
    <property type="entry name" value="NADH_Q_OxRdtase_suD"/>
</dbReference>
<dbReference type="InterPro" id="IPR037232">
    <property type="entry name" value="NADH_quin_OxRdtase_su_C/D-like"/>
</dbReference>
<dbReference type="InterPro" id="IPR001268">
    <property type="entry name" value="NADH_UbQ_OxRdtase_30kDa_su"/>
</dbReference>
<dbReference type="InterPro" id="IPR014029">
    <property type="entry name" value="NADH_UbQ_OxRdtase_49kDa_CS"/>
</dbReference>
<dbReference type="InterPro" id="IPR022885">
    <property type="entry name" value="NDH1_su_D/H"/>
</dbReference>
<dbReference type="InterPro" id="IPR029014">
    <property type="entry name" value="NiFe-Hase_large"/>
</dbReference>
<dbReference type="NCBIfam" id="TIGR01961">
    <property type="entry name" value="NuoC_fam"/>
    <property type="match status" value="1"/>
</dbReference>
<dbReference type="NCBIfam" id="TIGR01962">
    <property type="entry name" value="NuoD"/>
    <property type="match status" value="1"/>
</dbReference>
<dbReference type="NCBIfam" id="NF004739">
    <property type="entry name" value="PRK06075.1"/>
    <property type="match status" value="1"/>
</dbReference>
<dbReference type="NCBIfam" id="NF008728">
    <property type="entry name" value="PRK11742.1"/>
    <property type="match status" value="1"/>
</dbReference>
<dbReference type="PANTHER" id="PTHR11993:SF45">
    <property type="entry name" value="NADH-QUINONE OXIDOREDUCTASE SUBUNIT C_D"/>
    <property type="match status" value="1"/>
</dbReference>
<dbReference type="PANTHER" id="PTHR11993">
    <property type="entry name" value="NADH-UBIQUINONE OXIDOREDUCTASE 49 KDA SUBUNIT"/>
    <property type="match status" value="1"/>
</dbReference>
<dbReference type="Pfam" id="PF00329">
    <property type="entry name" value="Complex1_30kDa"/>
    <property type="match status" value="1"/>
</dbReference>
<dbReference type="Pfam" id="PF00346">
    <property type="entry name" value="Complex1_49kDa"/>
    <property type="match status" value="1"/>
</dbReference>
<dbReference type="SUPFAM" id="SSF56762">
    <property type="entry name" value="HydB/Nqo4-like"/>
    <property type="match status" value="1"/>
</dbReference>
<dbReference type="SUPFAM" id="SSF143243">
    <property type="entry name" value="Nqo5-like"/>
    <property type="match status" value="1"/>
</dbReference>
<dbReference type="PROSITE" id="PS00535">
    <property type="entry name" value="COMPLEX1_49K"/>
    <property type="match status" value="1"/>
</dbReference>
<organism>
    <name type="scientific">Pectobacterium atrosepticum (strain SCRI 1043 / ATCC BAA-672)</name>
    <name type="common">Erwinia carotovora subsp. atroseptica</name>
    <dbReference type="NCBI Taxonomy" id="218491"/>
    <lineage>
        <taxon>Bacteria</taxon>
        <taxon>Pseudomonadati</taxon>
        <taxon>Pseudomonadota</taxon>
        <taxon>Gammaproteobacteria</taxon>
        <taxon>Enterobacterales</taxon>
        <taxon>Pectobacteriaceae</taxon>
        <taxon>Pectobacterium</taxon>
    </lineage>
</organism>
<gene>
    <name evidence="1" type="primary">nuoC</name>
    <name evidence="1" type="synonym">nuoCD</name>
    <name evidence="1" type="synonym">nuoD</name>
    <name type="ordered locus">ECA3026</name>
</gene>
<reference key="1">
    <citation type="journal article" date="2004" name="Proc. Natl. Acad. Sci. U.S.A.">
        <title>Genome sequence of the enterobacterial phytopathogen Erwinia carotovora subsp. atroseptica and characterization of virulence factors.</title>
        <authorList>
            <person name="Bell K.S."/>
            <person name="Sebaihia M."/>
            <person name="Pritchard L."/>
            <person name="Holden M.T.G."/>
            <person name="Hyman L.J."/>
            <person name="Holeva M.C."/>
            <person name="Thomson N.R."/>
            <person name="Bentley S.D."/>
            <person name="Churcher L.J.C."/>
            <person name="Mungall K."/>
            <person name="Atkin R."/>
            <person name="Bason N."/>
            <person name="Brooks K."/>
            <person name="Chillingworth T."/>
            <person name="Clark K."/>
            <person name="Doggett J."/>
            <person name="Fraser A."/>
            <person name="Hance Z."/>
            <person name="Hauser H."/>
            <person name="Jagels K."/>
            <person name="Moule S."/>
            <person name="Norbertczak H."/>
            <person name="Ormond D."/>
            <person name="Price C."/>
            <person name="Quail M.A."/>
            <person name="Sanders M."/>
            <person name="Walker D."/>
            <person name="Whitehead S."/>
            <person name="Salmond G.P.C."/>
            <person name="Birch P.R.J."/>
            <person name="Parkhill J."/>
            <person name="Toth I.K."/>
        </authorList>
    </citation>
    <scope>NUCLEOTIDE SEQUENCE [LARGE SCALE GENOMIC DNA]</scope>
    <source>
        <strain>SCRI 1043 / ATCC BAA-672</strain>
    </source>
</reference>
<feature type="chain" id="PRO_0000358630" description="NADH-quinone oxidoreductase subunit C/D">
    <location>
        <begin position="1"/>
        <end position="599"/>
    </location>
</feature>
<feature type="region of interest" description="NADH dehydrogenase I subunit C" evidence="1">
    <location>
        <begin position="1"/>
        <end position="189"/>
    </location>
</feature>
<feature type="region of interest" description="NADH dehydrogenase I subunit D" evidence="1">
    <location>
        <begin position="213"/>
        <end position="599"/>
    </location>
</feature>
<comment type="function">
    <text evidence="1">NDH-1 shuttles electrons from NADH, via FMN and iron-sulfur (Fe-S) centers, to quinones in the respiratory chain. The immediate electron acceptor for the enzyme in this species is believed to be ubiquinone. Couples the redox reaction to proton translocation (for every two electrons transferred, four hydrogen ions are translocated across the cytoplasmic membrane), and thus conserves the redox energy in a proton gradient.</text>
</comment>
<comment type="catalytic activity">
    <reaction evidence="1">
        <text>a quinone + NADH + 5 H(+)(in) = a quinol + NAD(+) + 4 H(+)(out)</text>
        <dbReference type="Rhea" id="RHEA:57888"/>
        <dbReference type="ChEBI" id="CHEBI:15378"/>
        <dbReference type="ChEBI" id="CHEBI:24646"/>
        <dbReference type="ChEBI" id="CHEBI:57540"/>
        <dbReference type="ChEBI" id="CHEBI:57945"/>
        <dbReference type="ChEBI" id="CHEBI:132124"/>
    </reaction>
</comment>
<comment type="subunit">
    <text evidence="1">NDH-1 is composed of 13 different subunits. Subunits NuoB, CD, E, F, and G constitute the peripheral sector of the complex.</text>
</comment>
<comment type="subcellular location">
    <subcellularLocation>
        <location evidence="1">Cell inner membrane</location>
        <topology evidence="1">Peripheral membrane protein</topology>
        <orientation evidence="1">Cytoplasmic side</orientation>
    </subcellularLocation>
</comment>
<comment type="similarity">
    <text evidence="1">In the N-terminal section; belongs to the complex I 30 kDa subunit family.</text>
</comment>
<comment type="similarity">
    <text evidence="1">In the C-terminal section; belongs to the complex I 49 kDa subunit family.</text>
</comment>
<accession>Q6D2R9</accession>